<keyword id="KW-1003">Cell membrane</keyword>
<keyword id="KW-0472">Membrane</keyword>
<keyword id="KW-0520">NAD</keyword>
<keyword id="KW-0874">Quinone</keyword>
<keyword id="KW-1278">Translocase</keyword>
<keyword id="KW-0812">Transmembrane</keyword>
<keyword id="KW-1133">Transmembrane helix</keyword>
<keyword id="KW-0813">Transport</keyword>
<sequence length="118" mass="13634">MIQDYLIIGIFLIASFIFGMVVLLTASLVRPKKPNKEKLSTYECGVETTGSTWIRFKVSYFMYGLVFLLFDVETVFLLPWAVKFKSLGLFALFEMVIFIGILIIGLWYAWKEGALEWK</sequence>
<accession>A6LXQ5</accession>
<dbReference type="EC" id="7.1.1.-" evidence="1"/>
<dbReference type="EMBL" id="CP000721">
    <property type="protein sequence ID" value="ABR35135.1"/>
    <property type="molecule type" value="Genomic_DNA"/>
</dbReference>
<dbReference type="RefSeq" id="WP_012059188.1">
    <property type="nucleotide sequence ID" value="NC_009617.1"/>
</dbReference>
<dbReference type="SMR" id="A6LXQ5"/>
<dbReference type="KEGG" id="cbe:Cbei_2996"/>
<dbReference type="eggNOG" id="COG0838">
    <property type="taxonomic scope" value="Bacteria"/>
</dbReference>
<dbReference type="HOGENOM" id="CLU_119549_1_1_9"/>
<dbReference type="Proteomes" id="UP000000565">
    <property type="component" value="Chromosome"/>
</dbReference>
<dbReference type="GO" id="GO:0030964">
    <property type="term" value="C:NADH dehydrogenase complex"/>
    <property type="evidence" value="ECO:0007669"/>
    <property type="project" value="TreeGrafter"/>
</dbReference>
<dbReference type="GO" id="GO:0005886">
    <property type="term" value="C:plasma membrane"/>
    <property type="evidence" value="ECO:0007669"/>
    <property type="project" value="UniProtKB-SubCell"/>
</dbReference>
<dbReference type="GO" id="GO:0008137">
    <property type="term" value="F:NADH dehydrogenase (ubiquinone) activity"/>
    <property type="evidence" value="ECO:0007669"/>
    <property type="project" value="InterPro"/>
</dbReference>
<dbReference type="GO" id="GO:0050136">
    <property type="term" value="F:NADH:ubiquinone reductase (non-electrogenic) activity"/>
    <property type="evidence" value="ECO:0007669"/>
    <property type="project" value="UniProtKB-UniRule"/>
</dbReference>
<dbReference type="GO" id="GO:0048038">
    <property type="term" value="F:quinone binding"/>
    <property type="evidence" value="ECO:0007669"/>
    <property type="project" value="UniProtKB-KW"/>
</dbReference>
<dbReference type="Gene3D" id="1.20.58.1610">
    <property type="entry name" value="NADH:ubiquinone/plastoquinone oxidoreductase, chain 3"/>
    <property type="match status" value="1"/>
</dbReference>
<dbReference type="HAMAP" id="MF_01394">
    <property type="entry name" value="NDH1_NuoA"/>
    <property type="match status" value="1"/>
</dbReference>
<dbReference type="InterPro" id="IPR023043">
    <property type="entry name" value="NAD(P)H_OxRDtase_bac/plastid"/>
</dbReference>
<dbReference type="InterPro" id="IPR000440">
    <property type="entry name" value="NADH_UbQ/plastoQ_OxRdtase_su3"/>
</dbReference>
<dbReference type="InterPro" id="IPR038430">
    <property type="entry name" value="NDAH_ubi_oxred_su3_sf"/>
</dbReference>
<dbReference type="PANTHER" id="PTHR11058">
    <property type="entry name" value="NADH-UBIQUINONE OXIDOREDUCTASE CHAIN 3"/>
    <property type="match status" value="1"/>
</dbReference>
<dbReference type="PANTHER" id="PTHR11058:SF9">
    <property type="entry name" value="NADH-UBIQUINONE OXIDOREDUCTASE CHAIN 3"/>
    <property type="match status" value="1"/>
</dbReference>
<dbReference type="Pfam" id="PF00507">
    <property type="entry name" value="Oxidored_q4"/>
    <property type="match status" value="1"/>
</dbReference>
<reference key="1">
    <citation type="submission" date="2007-06" db="EMBL/GenBank/DDBJ databases">
        <title>Complete sequence of Clostridium beijerinckii NCIMB 8052.</title>
        <authorList>
            <consortium name="US DOE Joint Genome Institute"/>
            <person name="Copeland A."/>
            <person name="Lucas S."/>
            <person name="Lapidus A."/>
            <person name="Barry K."/>
            <person name="Detter J.C."/>
            <person name="Glavina del Rio T."/>
            <person name="Hammon N."/>
            <person name="Israni S."/>
            <person name="Dalin E."/>
            <person name="Tice H."/>
            <person name="Pitluck S."/>
            <person name="Sims D."/>
            <person name="Brettin T."/>
            <person name="Bruce D."/>
            <person name="Tapia R."/>
            <person name="Brainard J."/>
            <person name="Schmutz J."/>
            <person name="Larimer F."/>
            <person name="Land M."/>
            <person name="Hauser L."/>
            <person name="Kyrpides N."/>
            <person name="Mikhailova N."/>
            <person name="Bennet G."/>
            <person name="Cann I."/>
            <person name="Chen J.-S."/>
            <person name="Contreras A.L."/>
            <person name="Jones D."/>
            <person name="Kashket E."/>
            <person name="Mitchell W."/>
            <person name="Stoddard S."/>
            <person name="Schwarz W."/>
            <person name="Qureshi N."/>
            <person name="Young M."/>
            <person name="Shi Z."/>
            <person name="Ezeji T."/>
            <person name="White B."/>
            <person name="Blaschek H."/>
            <person name="Richardson P."/>
        </authorList>
    </citation>
    <scope>NUCLEOTIDE SEQUENCE [LARGE SCALE GENOMIC DNA]</scope>
    <source>
        <strain>ATCC 51743 / NCIMB 8052</strain>
    </source>
</reference>
<comment type="function">
    <text evidence="1">NDH-1 shuttles electrons from NADH, via FMN and iron-sulfur (Fe-S) centers, to quinones in the respiratory chain. The immediate electron acceptor for the enzyme in this species is believed to be a menaquinone. Couples the redox reaction to proton translocation (for every two electrons transferred, four hydrogen ions are translocated across the cytoplasmic membrane), and thus conserves the redox energy in a proton gradient.</text>
</comment>
<comment type="catalytic activity">
    <reaction evidence="1">
        <text>a quinone + NADH + 5 H(+)(in) = a quinol + NAD(+) + 4 H(+)(out)</text>
        <dbReference type="Rhea" id="RHEA:57888"/>
        <dbReference type="ChEBI" id="CHEBI:15378"/>
        <dbReference type="ChEBI" id="CHEBI:24646"/>
        <dbReference type="ChEBI" id="CHEBI:57540"/>
        <dbReference type="ChEBI" id="CHEBI:57945"/>
        <dbReference type="ChEBI" id="CHEBI:132124"/>
    </reaction>
</comment>
<comment type="subunit">
    <text evidence="1">NDH-1 is composed of 14 different subunits. Subunits NuoA, H, J, K, L, M, N constitute the membrane sector of the complex.</text>
</comment>
<comment type="subcellular location">
    <subcellularLocation>
        <location evidence="1">Cell membrane</location>
        <topology evidence="1">Multi-pass membrane protein</topology>
    </subcellularLocation>
</comment>
<comment type="similarity">
    <text evidence="1">Belongs to the complex I subunit 3 family.</text>
</comment>
<proteinExistence type="inferred from homology"/>
<feature type="chain" id="PRO_0000362665" description="NADH-quinone oxidoreductase subunit A">
    <location>
        <begin position="1"/>
        <end position="118"/>
    </location>
</feature>
<feature type="transmembrane region" description="Helical" evidence="1">
    <location>
        <begin position="6"/>
        <end position="26"/>
    </location>
</feature>
<feature type="transmembrane region" description="Helical" evidence="1">
    <location>
        <begin position="61"/>
        <end position="81"/>
    </location>
</feature>
<feature type="transmembrane region" description="Helical" evidence="1">
    <location>
        <begin position="87"/>
        <end position="107"/>
    </location>
</feature>
<name>NUOA_CLOB8</name>
<evidence type="ECO:0000255" key="1">
    <source>
        <dbReference type="HAMAP-Rule" id="MF_01394"/>
    </source>
</evidence>
<protein>
    <recommendedName>
        <fullName evidence="1">NADH-quinone oxidoreductase subunit A</fullName>
        <ecNumber evidence="1">7.1.1.-</ecNumber>
    </recommendedName>
    <alternativeName>
        <fullName evidence="1">NADH dehydrogenase I subunit A</fullName>
    </alternativeName>
    <alternativeName>
        <fullName evidence="1">NDH-1 subunit A</fullName>
    </alternativeName>
    <alternativeName>
        <fullName evidence="1">NUO1</fullName>
    </alternativeName>
</protein>
<gene>
    <name evidence="1" type="primary">nuoA</name>
    <name type="ordered locus">Cbei_2996</name>
</gene>
<organism>
    <name type="scientific">Clostridium beijerinckii (strain ATCC 51743 / NCIMB 8052)</name>
    <name type="common">Clostridium acetobutylicum</name>
    <dbReference type="NCBI Taxonomy" id="290402"/>
    <lineage>
        <taxon>Bacteria</taxon>
        <taxon>Bacillati</taxon>
        <taxon>Bacillota</taxon>
        <taxon>Clostridia</taxon>
        <taxon>Eubacteriales</taxon>
        <taxon>Clostridiaceae</taxon>
        <taxon>Clostridium</taxon>
    </lineage>
</organism>